<reference key="1">
    <citation type="submission" date="2008-02" db="EMBL/GenBank/DDBJ databases">
        <title>Complete sequence of Escherichia coli C str. ATCC 8739.</title>
        <authorList>
            <person name="Copeland A."/>
            <person name="Lucas S."/>
            <person name="Lapidus A."/>
            <person name="Glavina del Rio T."/>
            <person name="Dalin E."/>
            <person name="Tice H."/>
            <person name="Bruce D."/>
            <person name="Goodwin L."/>
            <person name="Pitluck S."/>
            <person name="Kiss H."/>
            <person name="Brettin T."/>
            <person name="Detter J.C."/>
            <person name="Han C."/>
            <person name="Kuske C.R."/>
            <person name="Schmutz J."/>
            <person name="Larimer F."/>
            <person name="Land M."/>
            <person name="Hauser L."/>
            <person name="Kyrpides N."/>
            <person name="Mikhailova N."/>
            <person name="Ingram L."/>
            <person name="Richardson P."/>
        </authorList>
    </citation>
    <scope>NUCLEOTIDE SEQUENCE [LARGE SCALE GENOMIC DNA]</scope>
    <source>
        <strain>ATCC 8739 / DSM 1576 / NBRC 3972 / NCIMB 8545 / WDCM 00012 / Crooks</strain>
    </source>
</reference>
<organism>
    <name type="scientific">Escherichia coli (strain ATCC 8739 / DSM 1576 / NBRC 3972 / NCIMB 8545 / WDCM 00012 / Crooks)</name>
    <dbReference type="NCBI Taxonomy" id="481805"/>
    <lineage>
        <taxon>Bacteria</taxon>
        <taxon>Pseudomonadati</taxon>
        <taxon>Pseudomonadota</taxon>
        <taxon>Gammaproteobacteria</taxon>
        <taxon>Enterobacterales</taxon>
        <taxon>Enterobacteriaceae</taxon>
        <taxon>Escherichia</taxon>
    </lineage>
</organism>
<comment type="function">
    <text evidence="1">Catalyzes the methyl esterification of L-isoaspartyl residues in peptides and proteins that result from spontaneous decomposition of normal L-aspartyl and L-asparaginyl residues. It plays a role in the repair and/or degradation of damaged proteins.</text>
</comment>
<comment type="catalytic activity">
    <reaction evidence="1">
        <text>[protein]-L-isoaspartate + S-adenosyl-L-methionine = [protein]-L-isoaspartate alpha-methyl ester + S-adenosyl-L-homocysteine</text>
        <dbReference type="Rhea" id="RHEA:12705"/>
        <dbReference type="Rhea" id="RHEA-COMP:12143"/>
        <dbReference type="Rhea" id="RHEA-COMP:12144"/>
        <dbReference type="ChEBI" id="CHEBI:57856"/>
        <dbReference type="ChEBI" id="CHEBI:59789"/>
        <dbReference type="ChEBI" id="CHEBI:90596"/>
        <dbReference type="ChEBI" id="CHEBI:90598"/>
        <dbReference type="EC" id="2.1.1.77"/>
    </reaction>
</comment>
<comment type="subcellular location">
    <subcellularLocation>
        <location evidence="1">Cytoplasm</location>
    </subcellularLocation>
</comment>
<comment type="similarity">
    <text evidence="1">Belongs to the methyltransferase superfamily. L-isoaspartyl/D-aspartyl protein methyltransferase family.</text>
</comment>
<evidence type="ECO:0000255" key="1">
    <source>
        <dbReference type="HAMAP-Rule" id="MF_00090"/>
    </source>
</evidence>
<feature type="chain" id="PRO_1000075449" description="Protein-L-isoaspartate O-methyltransferase">
    <location>
        <begin position="1"/>
        <end position="208"/>
    </location>
</feature>
<feature type="active site" evidence="1">
    <location>
        <position position="59"/>
    </location>
</feature>
<gene>
    <name evidence="1" type="primary">pcm</name>
    <name type="ordered locus">EcolC_0969</name>
</gene>
<keyword id="KW-0963">Cytoplasm</keyword>
<keyword id="KW-0489">Methyltransferase</keyword>
<keyword id="KW-0949">S-adenosyl-L-methionine</keyword>
<keyword id="KW-0808">Transferase</keyword>
<sequence length="208" mass="23258">MVSRRVQALLDQLRAQGIQDEQVLNALAAVPREKFVDEAFEQKAWDNIALPIGQGQTISQPYMVARMTELLELTPQSRVLEIGTGSGYQTAILAHLVQHVCSVERIKGLQWQARRRLKNLDLHNVSTRHGDGWQGWQARAPFDAIIVTAAPPEIPTALMTQLDEGGILVLPVGEEHQYLKRVRRRGGEFIIDTVEAVRFVPLVKGELA</sequence>
<proteinExistence type="inferred from homology"/>
<protein>
    <recommendedName>
        <fullName evidence="1">Protein-L-isoaspartate O-methyltransferase</fullName>
        <ecNumber evidence="1">2.1.1.77</ecNumber>
    </recommendedName>
    <alternativeName>
        <fullName evidence="1">L-isoaspartyl protein carboxyl methyltransferase</fullName>
    </alternativeName>
    <alternativeName>
        <fullName evidence="1">Protein L-isoaspartyl methyltransferase</fullName>
    </alternativeName>
    <alternativeName>
        <fullName evidence="1">Protein-beta-aspartate methyltransferase</fullName>
        <shortName evidence="1">PIMT</shortName>
    </alternativeName>
</protein>
<name>PIMT_ECOLC</name>
<dbReference type="EC" id="2.1.1.77" evidence="1"/>
<dbReference type="EMBL" id="CP000946">
    <property type="protein sequence ID" value="ACA76638.1"/>
    <property type="molecule type" value="Genomic_DNA"/>
</dbReference>
<dbReference type="RefSeq" id="WP_000254708.1">
    <property type="nucleotide sequence ID" value="NZ_MTFT01000049.1"/>
</dbReference>
<dbReference type="SMR" id="B1IUT6"/>
<dbReference type="GeneID" id="93779263"/>
<dbReference type="KEGG" id="ecl:EcolC_0969"/>
<dbReference type="HOGENOM" id="CLU_055432_2_0_6"/>
<dbReference type="GO" id="GO:0005737">
    <property type="term" value="C:cytoplasm"/>
    <property type="evidence" value="ECO:0007669"/>
    <property type="project" value="UniProtKB-SubCell"/>
</dbReference>
<dbReference type="GO" id="GO:0004719">
    <property type="term" value="F:protein-L-isoaspartate (D-aspartate) O-methyltransferase activity"/>
    <property type="evidence" value="ECO:0007669"/>
    <property type="project" value="UniProtKB-UniRule"/>
</dbReference>
<dbReference type="GO" id="GO:0032259">
    <property type="term" value="P:methylation"/>
    <property type="evidence" value="ECO:0007669"/>
    <property type="project" value="UniProtKB-KW"/>
</dbReference>
<dbReference type="GO" id="GO:0036211">
    <property type="term" value="P:protein modification process"/>
    <property type="evidence" value="ECO:0007669"/>
    <property type="project" value="UniProtKB-UniRule"/>
</dbReference>
<dbReference type="GO" id="GO:0030091">
    <property type="term" value="P:protein repair"/>
    <property type="evidence" value="ECO:0007669"/>
    <property type="project" value="UniProtKB-UniRule"/>
</dbReference>
<dbReference type="CDD" id="cd02440">
    <property type="entry name" value="AdoMet_MTases"/>
    <property type="match status" value="1"/>
</dbReference>
<dbReference type="FunFam" id="3.40.50.150:FF:000010">
    <property type="entry name" value="Protein-L-isoaspartate O-methyltransferase"/>
    <property type="match status" value="1"/>
</dbReference>
<dbReference type="Gene3D" id="3.40.50.150">
    <property type="entry name" value="Vaccinia Virus protein VP39"/>
    <property type="match status" value="1"/>
</dbReference>
<dbReference type="HAMAP" id="MF_00090">
    <property type="entry name" value="PIMT"/>
    <property type="match status" value="1"/>
</dbReference>
<dbReference type="InterPro" id="IPR000682">
    <property type="entry name" value="PCMT"/>
</dbReference>
<dbReference type="InterPro" id="IPR029063">
    <property type="entry name" value="SAM-dependent_MTases_sf"/>
</dbReference>
<dbReference type="NCBIfam" id="TIGR00080">
    <property type="entry name" value="pimt"/>
    <property type="match status" value="1"/>
</dbReference>
<dbReference type="NCBIfam" id="NF001453">
    <property type="entry name" value="PRK00312.1"/>
    <property type="match status" value="1"/>
</dbReference>
<dbReference type="PANTHER" id="PTHR11579">
    <property type="entry name" value="PROTEIN-L-ISOASPARTATE O-METHYLTRANSFERASE"/>
    <property type="match status" value="1"/>
</dbReference>
<dbReference type="PANTHER" id="PTHR11579:SF0">
    <property type="entry name" value="PROTEIN-L-ISOASPARTATE(D-ASPARTATE) O-METHYLTRANSFERASE"/>
    <property type="match status" value="1"/>
</dbReference>
<dbReference type="Pfam" id="PF01135">
    <property type="entry name" value="PCMT"/>
    <property type="match status" value="1"/>
</dbReference>
<dbReference type="SUPFAM" id="SSF53335">
    <property type="entry name" value="S-adenosyl-L-methionine-dependent methyltransferases"/>
    <property type="match status" value="1"/>
</dbReference>
<dbReference type="PROSITE" id="PS01279">
    <property type="entry name" value="PCMT"/>
    <property type="match status" value="1"/>
</dbReference>
<accession>B1IUT6</accession>